<reference key="1">
    <citation type="journal article" date="1997" name="Nature">
        <title>The complete genome sequence of the Gram-positive bacterium Bacillus subtilis.</title>
        <authorList>
            <person name="Kunst F."/>
            <person name="Ogasawara N."/>
            <person name="Moszer I."/>
            <person name="Albertini A.M."/>
            <person name="Alloni G."/>
            <person name="Azevedo V."/>
            <person name="Bertero M.G."/>
            <person name="Bessieres P."/>
            <person name="Bolotin A."/>
            <person name="Borchert S."/>
            <person name="Borriss R."/>
            <person name="Boursier L."/>
            <person name="Brans A."/>
            <person name="Braun M."/>
            <person name="Brignell S.C."/>
            <person name="Bron S."/>
            <person name="Brouillet S."/>
            <person name="Bruschi C.V."/>
            <person name="Caldwell B."/>
            <person name="Capuano V."/>
            <person name="Carter N.M."/>
            <person name="Choi S.-K."/>
            <person name="Codani J.-J."/>
            <person name="Connerton I.F."/>
            <person name="Cummings N.J."/>
            <person name="Daniel R.A."/>
            <person name="Denizot F."/>
            <person name="Devine K.M."/>
            <person name="Duesterhoeft A."/>
            <person name="Ehrlich S.D."/>
            <person name="Emmerson P.T."/>
            <person name="Entian K.-D."/>
            <person name="Errington J."/>
            <person name="Fabret C."/>
            <person name="Ferrari E."/>
            <person name="Foulger D."/>
            <person name="Fritz C."/>
            <person name="Fujita M."/>
            <person name="Fujita Y."/>
            <person name="Fuma S."/>
            <person name="Galizzi A."/>
            <person name="Galleron N."/>
            <person name="Ghim S.-Y."/>
            <person name="Glaser P."/>
            <person name="Goffeau A."/>
            <person name="Golightly E.J."/>
            <person name="Grandi G."/>
            <person name="Guiseppi G."/>
            <person name="Guy B.J."/>
            <person name="Haga K."/>
            <person name="Haiech J."/>
            <person name="Harwood C.R."/>
            <person name="Henaut A."/>
            <person name="Hilbert H."/>
            <person name="Holsappel S."/>
            <person name="Hosono S."/>
            <person name="Hullo M.-F."/>
            <person name="Itaya M."/>
            <person name="Jones L.-M."/>
            <person name="Joris B."/>
            <person name="Karamata D."/>
            <person name="Kasahara Y."/>
            <person name="Klaerr-Blanchard M."/>
            <person name="Klein C."/>
            <person name="Kobayashi Y."/>
            <person name="Koetter P."/>
            <person name="Koningstein G."/>
            <person name="Krogh S."/>
            <person name="Kumano M."/>
            <person name="Kurita K."/>
            <person name="Lapidus A."/>
            <person name="Lardinois S."/>
            <person name="Lauber J."/>
            <person name="Lazarevic V."/>
            <person name="Lee S.-M."/>
            <person name="Levine A."/>
            <person name="Liu H."/>
            <person name="Masuda S."/>
            <person name="Mauel C."/>
            <person name="Medigue C."/>
            <person name="Medina N."/>
            <person name="Mellado R.P."/>
            <person name="Mizuno M."/>
            <person name="Moestl D."/>
            <person name="Nakai S."/>
            <person name="Noback M."/>
            <person name="Noone D."/>
            <person name="O'Reilly M."/>
            <person name="Ogawa K."/>
            <person name="Ogiwara A."/>
            <person name="Oudega B."/>
            <person name="Park S.-H."/>
            <person name="Parro V."/>
            <person name="Pohl T.M."/>
            <person name="Portetelle D."/>
            <person name="Porwollik S."/>
            <person name="Prescott A.M."/>
            <person name="Presecan E."/>
            <person name="Pujic P."/>
            <person name="Purnelle B."/>
            <person name="Rapoport G."/>
            <person name="Rey M."/>
            <person name="Reynolds S."/>
            <person name="Rieger M."/>
            <person name="Rivolta C."/>
            <person name="Rocha E."/>
            <person name="Roche B."/>
            <person name="Rose M."/>
            <person name="Sadaie Y."/>
            <person name="Sato T."/>
            <person name="Scanlan E."/>
            <person name="Schleich S."/>
            <person name="Schroeter R."/>
            <person name="Scoffone F."/>
            <person name="Sekiguchi J."/>
            <person name="Sekowska A."/>
            <person name="Seror S.J."/>
            <person name="Serror P."/>
            <person name="Shin B.-S."/>
            <person name="Soldo B."/>
            <person name="Sorokin A."/>
            <person name="Tacconi E."/>
            <person name="Takagi T."/>
            <person name="Takahashi H."/>
            <person name="Takemaru K."/>
            <person name="Takeuchi M."/>
            <person name="Tamakoshi A."/>
            <person name="Tanaka T."/>
            <person name="Terpstra P."/>
            <person name="Tognoni A."/>
            <person name="Tosato V."/>
            <person name="Uchiyama S."/>
            <person name="Vandenbol M."/>
            <person name="Vannier F."/>
            <person name="Vassarotti A."/>
            <person name="Viari A."/>
            <person name="Wambutt R."/>
            <person name="Wedler E."/>
            <person name="Wedler H."/>
            <person name="Weitzenegger T."/>
            <person name="Winters P."/>
            <person name="Wipat A."/>
            <person name="Yamamoto H."/>
            <person name="Yamane K."/>
            <person name="Yasumoto K."/>
            <person name="Yata K."/>
            <person name="Yoshida K."/>
            <person name="Yoshikawa H.-F."/>
            <person name="Zumstein E."/>
            <person name="Yoshikawa H."/>
            <person name="Danchin A."/>
        </authorList>
    </citation>
    <scope>NUCLEOTIDE SEQUENCE [LARGE SCALE GENOMIC DNA]</scope>
    <source>
        <strain>168</strain>
    </source>
</reference>
<evidence type="ECO:0000305" key="1"/>
<name>YUNF_BACSU</name>
<feature type="chain" id="PRO_0000389628" description="UPF0759 protein YunF">
    <location>
        <begin position="1"/>
        <end position="282"/>
    </location>
</feature>
<dbReference type="EMBL" id="AL009126">
    <property type="protein sequence ID" value="CAB15229.2"/>
    <property type="molecule type" value="Genomic_DNA"/>
</dbReference>
<dbReference type="RefSeq" id="NP_391119.2">
    <property type="nucleotide sequence ID" value="NC_000964.3"/>
</dbReference>
<dbReference type="RefSeq" id="WP_003243895.1">
    <property type="nucleotide sequence ID" value="NZ_OZ025638.1"/>
</dbReference>
<dbReference type="SMR" id="O32135"/>
<dbReference type="FunCoup" id="O32135">
    <property type="interactions" value="32"/>
</dbReference>
<dbReference type="STRING" id="224308.BSU32390"/>
<dbReference type="PaxDb" id="224308-BSU32390"/>
<dbReference type="DNASU" id="937089"/>
<dbReference type="EnsemblBacteria" id="CAB15229">
    <property type="protein sequence ID" value="CAB15229"/>
    <property type="gene ID" value="BSU_32390"/>
</dbReference>
<dbReference type="GeneID" id="937089"/>
<dbReference type="KEGG" id="bsu:BSU32390"/>
<dbReference type="PATRIC" id="fig|224308.179.peg.3506"/>
<dbReference type="eggNOG" id="COG1801">
    <property type="taxonomic scope" value="Bacteria"/>
</dbReference>
<dbReference type="InParanoid" id="O32135"/>
<dbReference type="OrthoDB" id="9780310at2"/>
<dbReference type="PhylomeDB" id="O32135"/>
<dbReference type="BioCyc" id="BSUB:BSU32390-MONOMER"/>
<dbReference type="Proteomes" id="UP000001570">
    <property type="component" value="Chromosome"/>
</dbReference>
<dbReference type="Gene3D" id="3.20.20.410">
    <property type="entry name" value="Protein of unknown function UPF0759"/>
    <property type="match status" value="1"/>
</dbReference>
<dbReference type="InterPro" id="IPR002763">
    <property type="entry name" value="DUF72"/>
</dbReference>
<dbReference type="InterPro" id="IPR036520">
    <property type="entry name" value="UPF0759_sf"/>
</dbReference>
<dbReference type="PANTHER" id="PTHR30348">
    <property type="entry name" value="UNCHARACTERIZED PROTEIN YECE"/>
    <property type="match status" value="1"/>
</dbReference>
<dbReference type="PANTHER" id="PTHR30348:SF13">
    <property type="entry name" value="UPF0759 PROTEIN YUNF"/>
    <property type="match status" value="1"/>
</dbReference>
<dbReference type="Pfam" id="PF01904">
    <property type="entry name" value="DUF72"/>
    <property type="match status" value="1"/>
</dbReference>
<dbReference type="SUPFAM" id="SSF117396">
    <property type="entry name" value="TM1631-like"/>
    <property type="match status" value="1"/>
</dbReference>
<organism>
    <name type="scientific">Bacillus subtilis (strain 168)</name>
    <dbReference type="NCBI Taxonomy" id="224308"/>
    <lineage>
        <taxon>Bacteria</taxon>
        <taxon>Bacillati</taxon>
        <taxon>Bacillota</taxon>
        <taxon>Bacilli</taxon>
        <taxon>Bacillales</taxon>
        <taxon>Bacillaceae</taxon>
        <taxon>Bacillus</taxon>
    </lineage>
</organism>
<keyword id="KW-1185">Reference proteome</keyword>
<gene>
    <name type="primary">yunF</name>
    <name type="ordered locus">BSU32390</name>
</gene>
<sequence length="282" mass="32957">MIYIGLTGWGDHDSIYPPKTASQKKLQAYSSHFPIVELDASFYAIQPARNNEKWVKETPETFQFIVKAYQGMTGHQRGEIPFDSKEEMFDAFKVSLTPYLHSNKLAMVLFQFPPWFDCKKENVAYLRWCKHQMGDIPCALEFRNRSWFSPPFYEQTLSFMKAEGWIHSVCDEPQIGEGSVPTVLRATDENKTLVRFHGRNKQGWMKPDGGKNWREVRYLYRYNQQELEDWKKHLNELQQQCKDVFVLFNNNSGGDAADNGKQMLELLDIEYSGLAPRQLDLF</sequence>
<proteinExistence type="inferred from homology"/>
<comment type="similarity">
    <text evidence="1">Belongs to the UPF0759 family.</text>
</comment>
<accession>O32135</accession>
<protein>
    <recommendedName>
        <fullName>UPF0759 protein YunF</fullName>
    </recommendedName>
</protein>